<reference key="1">
    <citation type="journal article" date="1990" name="Gene">
        <title>A cDNA encoding human ribosomal protein S24.</title>
        <authorList>
            <person name="Brown S.J."/>
            <person name="Jewell A."/>
            <person name="Maki C.G."/>
            <person name="Roufa D.J."/>
        </authorList>
    </citation>
    <scope>NUCLEOTIDE SEQUENCE [MRNA] (ISOFORM 1)</scope>
</reference>
<reference key="2">
    <citation type="journal article" date="1996" name="Gene">
        <title>The gene encoding human ribosomal protein S24 and tissue-specific expression of differentially spliced mRNAs.</title>
        <authorList>
            <person name="Xu W.-B."/>
            <person name="Roufa D.J."/>
        </authorList>
    </citation>
    <scope>NUCLEOTIDE SEQUENCE [GENOMIC DNA]</scope>
    <scope>ALTERNATIVE SPLICING</scope>
</reference>
<reference key="3">
    <citation type="submission" date="2003-04" db="EMBL/GenBank/DDBJ databases">
        <title>Full-length cDNA libraries and normalization.</title>
        <authorList>
            <person name="Li W.B."/>
            <person name="Gruber C."/>
            <person name="Jessee J."/>
            <person name="Polayes D."/>
        </authorList>
    </citation>
    <scope>NUCLEOTIDE SEQUENCE [LARGE SCALE MRNA] (ISOFORM 4)</scope>
    <source>
        <tissue>Placenta</tissue>
    </source>
</reference>
<reference key="4">
    <citation type="journal article" date="2004" name="Nat. Genet.">
        <title>Complete sequencing and characterization of 21,243 full-length human cDNAs.</title>
        <authorList>
            <person name="Ota T."/>
            <person name="Suzuki Y."/>
            <person name="Nishikawa T."/>
            <person name="Otsuki T."/>
            <person name="Sugiyama T."/>
            <person name="Irie R."/>
            <person name="Wakamatsu A."/>
            <person name="Hayashi K."/>
            <person name="Sato H."/>
            <person name="Nagai K."/>
            <person name="Kimura K."/>
            <person name="Makita H."/>
            <person name="Sekine M."/>
            <person name="Obayashi M."/>
            <person name="Nishi T."/>
            <person name="Shibahara T."/>
            <person name="Tanaka T."/>
            <person name="Ishii S."/>
            <person name="Yamamoto J."/>
            <person name="Saito K."/>
            <person name="Kawai Y."/>
            <person name="Isono Y."/>
            <person name="Nakamura Y."/>
            <person name="Nagahari K."/>
            <person name="Murakami K."/>
            <person name="Yasuda T."/>
            <person name="Iwayanagi T."/>
            <person name="Wagatsuma M."/>
            <person name="Shiratori A."/>
            <person name="Sudo H."/>
            <person name="Hosoiri T."/>
            <person name="Kaku Y."/>
            <person name="Kodaira H."/>
            <person name="Kondo H."/>
            <person name="Sugawara M."/>
            <person name="Takahashi M."/>
            <person name="Kanda K."/>
            <person name="Yokoi T."/>
            <person name="Furuya T."/>
            <person name="Kikkawa E."/>
            <person name="Omura Y."/>
            <person name="Abe K."/>
            <person name="Kamihara K."/>
            <person name="Katsuta N."/>
            <person name="Sato K."/>
            <person name="Tanikawa M."/>
            <person name="Yamazaki M."/>
            <person name="Ninomiya K."/>
            <person name="Ishibashi T."/>
            <person name="Yamashita H."/>
            <person name="Murakawa K."/>
            <person name="Fujimori K."/>
            <person name="Tanai H."/>
            <person name="Kimata M."/>
            <person name="Watanabe M."/>
            <person name="Hiraoka S."/>
            <person name="Chiba Y."/>
            <person name="Ishida S."/>
            <person name="Ono Y."/>
            <person name="Takiguchi S."/>
            <person name="Watanabe S."/>
            <person name="Yosida M."/>
            <person name="Hotuta T."/>
            <person name="Kusano J."/>
            <person name="Kanehori K."/>
            <person name="Takahashi-Fujii A."/>
            <person name="Hara H."/>
            <person name="Tanase T.-O."/>
            <person name="Nomura Y."/>
            <person name="Togiya S."/>
            <person name="Komai F."/>
            <person name="Hara R."/>
            <person name="Takeuchi K."/>
            <person name="Arita M."/>
            <person name="Imose N."/>
            <person name="Musashino K."/>
            <person name="Yuuki H."/>
            <person name="Oshima A."/>
            <person name="Sasaki N."/>
            <person name="Aotsuka S."/>
            <person name="Yoshikawa Y."/>
            <person name="Matsunawa H."/>
            <person name="Ichihara T."/>
            <person name="Shiohata N."/>
            <person name="Sano S."/>
            <person name="Moriya S."/>
            <person name="Momiyama H."/>
            <person name="Satoh N."/>
            <person name="Takami S."/>
            <person name="Terashima Y."/>
            <person name="Suzuki O."/>
            <person name="Nakagawa S."/>
            <person name="Senoh A."/>
            <person name="Mizoguchi H."/>
            <person name="Goto Y."/>
            <person name="Shimizu F."/>
            <person name="Wakebe H."/>
            <person name="Hishigaki H."/>
            <person name="Watanabe T."/>
            <person name="Sugiyama A."/>
            <person name="Takemoto M."/>
            <person name="Kawakami B."/>
            <person name="Yamazaki M."/>
            <person name="Watanabe K."/>
            <person name="Kumagai A."/>
            <person name="Itakura S."/>
            <person name="Fukuzumi Y."/>
            <person name="Fujimori Y."/>
            <person name="Komiyama M."/>
            <person name="Tashiro H."/>
            <person name="Tanigami A."/>
            <person name="Fujiwara T."/>
            <person name="Ono T."/>
            <person name="Yamada K."/>
            <person name="Fujii Y."/>
            <person name="Ozaki K."/>
            <person name="Hirao M."/>
            <person name="Ohmori Y."/>
            <person name="Kawabata A."/>
            <person name="Hikiji T."/>
            <person name="Kobatake N."/>
            <person name="Inagaki H."/>
            <person name="Ikema Y."/>
            <person name="Okamoto S."/>
            <person name="Okitani R."/>
            <person name="Kawakami T."/>
            <person name="Noguchi S."/>
            <person name="Itoh T."/>
            <person name="Shigeta K."/>
            <person name="Senba T."/>
            <person name="Matsumura K."/>
            <person name="Nakajima Y."/>
            <person name="Mizuno T."/>
            <person name="Morinaga M."/>
            <person name="Sasaki M."/>
            <person name="Togashi T."/>
            <person name="Oyama M."/>
            <person name="Hata H."/>
            <person name="Watanabe M."/>
            <person name="Komatsu T."/>
            <person name="Mizushima-Sugano J."/>
            <person name="Satoh T."/>
            <person name="Shirai Y."/>
            <person name="Takahashi Y."/>
            <person name="Nakagawa K."/>
            <person name="Okumura K."/>
            <person name="Nagase T."/>
            <person name="Nomura N."/>
            <person name="Kikuchi H."/>
            <person name="Masuho Y."/>
            <person name="Yamashita R."/>
            <person name="Nakai K."/>
            <person name="Yada T."/>
            <person name="Nakamura Y."/>
            <person name="Ohara O."/>
            <person name="Isogai T."/>
            <person name="Sugano S."/>
        </authorList>
    </citation>
    <scope>NUCLEOTIDE SEQUENCE [LARGE SCALE MRNA] (ISOFORMS 1 AND 2)</scope>
    <source>
        <tissue>Brain</tissue>
        <tissue>Thymus</tissue>
    </source>
</reference>
<reference key="5">
    <citation type="journal article" date="2007" name="BMC Genomics">
        <title>The full-ORF clone resource of the German cDNA consortium.</title>
        <authorList>
            <person name="Bechtel S."/>
            <person name="Rosenfelder H."/>
            <person name="Duda A."/>
            <person name="Schmidt C.P."/>
            <person name="Ernst U."/>
            <person name="Wellenreuther R."/>
            <person name="Mehrle A."/>
            <person name="Schuster C."/>
            <person name="Bahr A."/>
            <person name="Bloecker H."/>
            <person name="Heubner D."/>
            <person name="Hoerlein A."/>
            <person name="Michel G."/>
            <person name="Wedler H."/>
            <person name="Koehrer K."/>
            <person name="Ottenwaelder B."/>
            <person name="Poustka A."/>
            <person name="Wiemann S."/>
            <person name="Schupp I."/>
        </authorList>
    </citation>
    <scope>NUCLEOTIDE SEQUENCE [LARGE SCALE MRNA] (ISOFORM 3)</scope>
    <source>
        <tissue>Retina</tissue>
    </source>
</reference>
<reference key="6">
    <citation type="journal article" date="2004" name="Nature">
        <title>The DNA sequence and comparative analysis of human chromosome 10.</title>
        <authorList>
            <person name="Deloukas P."/>
            <person name="Earthrowl M.E."/>
            <person name="Grafham D.V."/>
            <person name="Rubenfield M."/>
            <person name="French L."/>
            <person name="Steward C.A."/>
            <person name="Sims S.K."/>
            <person name="Jones M.C."/>
            <person name="Searle S."/>
            <person name="Scott C."/>
            <person name="Howe K."/>
            <person name="Hunt S.E."/>
            <person name="Andrews T.D."/>
            <person name="Gilbert J.G.R."/>
            <person name="Swarbreck D."/>
            <person name="Ashurst J.L."/>
            <person name="Taylor A."/>
            <person name="Battles J."/>
            <person name="Bird C.P."/>
            <person name="Ainscough R."/>
            <person name="Almeida J.P."/>
            <person name="Ashwell R.I.S."/>
            <person name="Ambrose K.D."/>
            <person name="Babbage A.K."/>
            <person name="Bagguley C.L."/>
            <person name="Bailey J."/>
            <person name="Banerjee R."/>
            <person name="Bates K."/>
            <person name="Beasley H."/>
            <person name="Bray-Allen S."/>
            <person name="Brown A.J."/>
            <person name="Brown J.Y."/>
            <person name="Burford D.C."/>
            <person name="Burrill W."/>
            <person name="Burton J."/>
            <person name="Cahill P."/>
            <person name="Camire D."/>
            <person name="Carter N.P."/>
            <person name="Chapman J.C."/>
            <person name="Clark S.Y."/>
            <person name="Clarke G."/>
            <person name="Clee C.M."/>
            <person name="Clegg S."/>
            <person name="Corby N."/>
            <person name="Coulson A."/>
            <person name="Dhami P."/>
            <person name="Dutta I."/>
            <person name="Dunn M."/>
            <person name="Faulkner L."/>
            <person name="Frankish A."/>
            <person name="Frankland J.A."/>
            <person name="Garner P."/>
            <person name="Garnett J."/>
            <person name="Gribble S."/>
            <person name="Griffiths C."/>
            <person name="Grocock R."/>
            <person name="Gustafson E."/>
            <person name="Hammond S."/>
            <person name="Harley J.L."/>
            <person name="Hart E."/>
            <person name="Heath P.D."/>
            <person name="Ho T.P."/>
            <person name="Hopkins B."/>
            <person name="Horne J."/>
            <person name="Howden P.J."/>
            <person name="Huckle E."/>
            <person name="Hynds C."/>
            <person name="Johnson C."/>
            <person name="Johnson D."/>
            <person name="Kana A."/>
            <person name="Kay M."/>
            <person name="Kimberley A.M."/>
            <person name="Kershaw J.K."/>
            <person name="Kokkinaki M."/>
            <person name="Laird G.K."/>
            <person name="Lawlor S."/>
            <person name="Lee H.M."/>
            <person name="Leongamornlert D.A."/>
            <person name="Laird G."/>
            <person name="Lloyd C."/>
            <person name="Lloyd D.M."/>
            <person name="Loveland J."/>
            <person name="Lovell J."/>
            <person name="McLaren S."/>
            <person name="McLay K.E."/>
            <person name="McMurray A."/>
            <person name="Mashreghi-Mohammadi M."/>
            <person name="Matthews L."/>
            <person name="Milne S."/>
            <person name="Nickerson T."/>
            <person name="Nguyen M."/>
            <person name="Overton-Larty E."/>
            <person name="Palmer S.A."/>
            <person name="Pearce A.V."/>
            <person name="Peck A.I."/>
            <person name="Pelan S."/>
            <person name="Phillimore B."/>
            <person name="Porter K."/>
            <person name="Rice C.M."/>
            <person name="Rogosin A."/>
            <person name="Ross M.T."/>
            <person name="Sarafidou T."/>
            <person name="Sehra H.K."/>
            <person name="Shownkeen R."/>
            <person name="Skuce C.D."/>
            <person name="Smith M."/>
            <person name="Standring L."/>
            <person name="Sycamore N."/>
            <person name="Tester J."/>
            <person name="Thorpe A."/>
            <person name="Torcasso W."/>
            <person name="Tracey A."/>
            <person name="Tromans A."/>
            <person name="Tsolas J."/>
            <person name="Wall M."/>
            <person name="Walsh J."/>
            <person name="Wang H."/>
            <person name="Weinstock K."/>
            <person name="West A.P."/>
            <person name="Willey D.L."/>
            <person name="Whitehead S.L."/>
            <person name="Wilming L."/>
            <person name="Wray P.W."/>
            <person name="Young L."/>
            <person name="Chen Y."/>
            <person name="Lovering R.C."/>
            <person name="Moschonas N.K."/>
            <person name="Siebert R."/>
            <person name="Fechtel K."/>
            <person name="Bentley D."/>
            <person name="Durbin R.M."/>
            <person name="Hubbard T."/>
            <person name="Doucette-Stamm L."/>
            <person name="Beck S."/>
            <person name="Smith D.R."/>
            <person name="Rogers J."/>
        </authorList>
    </citation>
    <scope>NUCLEOTIDE SEQUENCE [LARGE SCALE GENOMIC DNA]</scope>
</reference>
<reference key="7">
    <citation type="submission" date="2005-07" db="EMBL/GenBank/DDBJ databases">
        <authorList>
            <person name="Mural R.J."/>
            <person name="Istrail S."/>
            <person name="Sutton G.G."/>
            <person name="Florea L."/>
            <person name="Halpern A.L."/>
            <person name="Mobarry C.M."/>
            <person name="Lippert R."/>
            <person name="Walenz B."/>
            <person name="Shatkay H."/>
            <person name="Dew I."/>
            <person name="Miller J.R."/>
            <person name="Flanigan M.J."/>
            <person name="Edwards N.J."/>
            <person name="Bolanos R."/>
            <person name="Fasulo D."/>
            <person name="Halldorsson B.V."/>
            <person name="Hannenhalli S."/>
            <person name="Turner R."/>
            <person name="Yooseph S."/>
            <person name="Lu F."/>
            <person name="Nusskern D.R."/>
            <person name="Shue B.C."/>
            <person name="Zheng X.H."/>
            <person name="Zhong F."/>
            <person name="Delcher A.L."/>
            <person name="Huson D.H."/>
            <person name="Kravitz S.A."/>
            <person name="Mouchard L."/>
            <person name="Reinert K."/>
            <person name="Remington K.A."/>
            <person name="Clark A.G."/>
            <person name="Waterman M.S."/>
            <person name="Eichler E.E."/>
            <person name="Adams M.D."/>
            <person name="Hunkapiller M.W."/>
            <person name="Myers E.W."/>
            <person name="Venter J.C."/>
        </authorList>
    </citation>
    <scope>NUCLEOTIDE SEQUENCE [LARGE SCALE GENOMIC DNA]</scope>
</reference>
<reference key="8">
    <citation type="journal article" date="2004" name="Genome Res.">
        <title>The status, quality, and expansion of the NIH full-length cDNA project: the Mammalian Gene Collection (MGC).</title>
        <authorList>
            <consortium name="The MGC Project Team"/>
        </authorList>
    </citation>
    <scope>NUCLEOTIDE SEQUENCE [LARGE SCALE MRNA] (ISOFORM 2)</scope>
    <source>
        <tissue>Kidney</tissue>
        <tissue>Muscle</tissue>
    </source>
</reference>
<reference key="9">
    <citation type="submission" date="2004-10" db="UniProtKB">
        <authorList>
            <person name="Quadroni M."/>
        </authorList>
    </citation>
    <scope>PROTEIN SEQUENCE OF 1-8; 50-61; 69-83 AND 119-132</scope>
    <scope>ACETYLATION AT MET-1</scope>
    <scope>IDENTIFICATION BY MASS SPECTROMETRY</scope>
    <source>
        <tissue>B-cell lymphoma</tissue>
    </source>
</reference>
<reference key="10">
    <citation type="journal article" date="1996" name="Eur. J. Biochem.">
        <title>Characterization of the human small-ribosomal-subunit proteins by N-terminal and internal sequencing, and mass spectrometry.</title>
        <authorList>
            <person name="Vladimirov S.N."/>
            <person name="Ivanov A.V."/>
            <person name="Karpova G.G."/>
            <person name="Musolyamov A.K."/>
            <person name="Egorov T.A."/>
            <person name="Thiede B."/>
            <person name="Wittmann-Liebold B."/>
            <person name="Otto A."/>
        </authorList>
    </citation>
    <scope>PROTEIN SEQUENCE OF 69-83</scope>
    <source>
        <tissue>Placenta</tissue>
    </source>
</reference>
<reference key="11">
    <citation type="journal article" date="2003" name="Nature">
        <title>Proteomic characterization of the human centrosome by protein correlation profiling.</title>
        <authorList>
            <person name="Andersen J.S."/>
            <person name="Wilkinson C.J."/>
            <person name="Mayor T."/>
            <person name="Mortensen P."/>
            <person name="Nigg E.A."/>
            <person name="Mann M."/>
        </authorList>
    </citation>
    <scope>IDENTIFICATION BY MASS SPECTROMETRY</scope>
    <source>
        <tissue>Lymphoblast</tissue>
    </source>
</reference>
<reference key="12">
    <citation type="journal article" date="2006" name="Am. J. Hum. Genet.">
        <title>Ribosomal protein S24 gene is mutated in Diamond-Blackfan anemia.</title>
        <authorList>
            <person name="Gazda H.T."/>
            <person name="Grabowska A."/>
            <person name="Merida-Long L.B."/>
            <person name="Latawiec E."/>
            <person name="Schneider H.E."/>
            <person name="Lipton J.M."/>
            <person name="Vlachos A."/>
            <person name="Atsidaftos E."/>
            <person name="Ball S.E."/>
            <person name="Orfali K.A."/>
            <person name="Niewiadomska E."/>
            <person name="Da Costa L."/>
            <person name="Tchernia G."/>
            <person name="Niemeyer C."/>
            <person name="Meerpohl J.J."/>
            <person name="Stahl J."/>
            <person name="Schratt G."/>
            <person name="Glader B."/>
            <person name="Backer K."/>
            <person name="Wong C."/>
            <person name="Nathan D.G."/>
            <person name="Beggs A.H."/>
            <person name="Sieff C.A."/>
        </authorList>
    </citation>
    <scope>INVOLVEMENT IN DBA3</scope>
    <scope>TISSUE SPECIFICITY</scope>
</reference>
<reference key="13">
    <citation type="journal article" date="2008" name="Hum. Mol. Genet.">
        <title>Mutation of ribosomal protein RPS24 in Diamond-Blackfan anemia results in a ribosome biogenesis disorder.</title>
        <authorList>
            <person name="Choesmel V."/>
            <person name="Fribourg S."/>
            <person name="Aguissa-Toure A.H."/>
            <person name="Pinaud N."/>
            <person name="Legrand P."/>
            <person name="Gazda H.T."/>
            <person name="Gleizes P.E."/>
        </authorList>
    </citation>
    <scope>FUNCTION</scope>
</reference>
<reference key="14">
    <citation type="journal article" date="2009" name="Anal. Chem.">
        <title>Lys-N and trypsin cover complementary parts of the phosphoproteome in a refined SCX-based approach.</title>
        <authorList>
            <person name="Gauci S."/>
            <person name="Helbig A.O."/>
            <person name="Slijper M."/>
            <person name="Krijgsveld J."/>
            <person name="Heck A.J."/>
            <person name="Mohammed S."/>
        </authorList>
    </citation>
    <scope>ACETYLATION [LARGE SCALE ANALYSIS] AT MET-1</scope>
    <scope>IDENTIFICATION BY MASS SPECTROMETRY [LARGE SCALE ANALYSIS]</scope>
</reference>
<reference key="15">
    <citation type="journal article" date="2010" name="Sci. Signal.">
        <title>Quantitative phosphoproteomics reveals widespread full phosphorylation site occupancy during mitosis.</title>
        <authorList>
            <person name="Olsen J.V."/>
            <person name="Vermeulen M."/>
            <person name="Santamaria A."/>
            <person name="Kumar C."/>
            <person name="Miller M.L."/>
            <person name="Jensen L.J."/>
            <person name="Gnad F."/>
            <person name="Cox J."/>
            <person name="Jensen T.S."/>
            <person name="Nigg E.A."/>
            <person name="Brunak S."/>
            <person name="Mann M."/>
        </authorList>
    </citation>
    <scope>PHOSPHORYLATION [LARGE SCALE ANALYSIS] AT THR-9</scope>
    <scope>IDENTIFICATION BY MASS SPECTROMETRY [LARGE SCALE ANALYSIS]</scope>
    <source>
        <tissue>Cervix carcinoma</tissue>
    </source>
</reference>
<reference key="16">
    <citation type="journal article" date="2011" name="BMC Syst. Biol.">
        <title>Initial characterization of the human central proteome.</title>
        <authorList>
            <person name="Burkard T.R."/>
            <person name="Planyavsky M."/>
            <person name="Kaupe I."/>
            <person name="Breitwieser F.P."/>
            <person name="Buerckstuemmer T."/>
            <person name="Bennett K.L."/>
            <person name="Superti-Furga G."/>
            <person name="Colinge J."/>
        </authorList>
    </citation>
    <scope>IDENTIFICATION BY MASS SPECTROMETRY [LARGE SCALE ANALYSIS]</scope>
</reference>
<reference key="17">
    <citation type="journal article" date="2012" name="Mol. Cell. Proteomics">
        <title>Comparative large-scale characterisation of plant vs. mammal proteins reveals similar and idiosyncratic N-alpha acetylation features.</title>
        <authorList>
            <person name="Bienvenut W.V."/>
            <person name="Sumpton D."/>
            <person name="Martinez A."/>
            <person name="Lilla S."/>
            <person name="Espagne C."/>
            <person name="Meinnel T."/>
            <person name="Giglione C."/>
        </authorList>
    </citation>
    <scope>ACETYLATION [LARGE SCALE ANALYSIS] AT MET-1</scope>
    <scope>IDENTIFICATION BY MASS SPECTROMETRY [LARGE SCALE ANALYSIS]</scope>
</reference>
<reference key="18">
    <citation type="journal article" date="2012" name="Proc. Natl. Acad. Sci. U.S.A.">
        <title>N-terminal acetylome analyses and functional insights of the N-terminal acetyltransferase NatB.</title>
        <authorList>
            <person name="Van Damme P."/>
            <person name="Lasa M."/>
            <person name="Polevoda B."/>
            <person name="Gazquez C."/>
            <person name="Elosegui-Artola A."/>
            <person name="Kim D.S."/>
            <person name="De Juan-Pardo E."/>
            <person name="Demeyer K."/>
            <person name="Hole K."/>
            <person name="Larrea E."/>
            <person name="Timmerman E."/>
            <person name="Prieto J."/>
            <person name="Arnesen T."/>
            <person name="Sherman F."/>
            <person name="Gevaert K."/>
            <person name="Aldabe R."/>
        </authorList>
    </citation>
    <scope>ACETYLATION [LARGE SCALE ANALYSIS] AT MET-1</scope>
    <scope>IDENTIFICATION BY MASS SPECTROMETRY [LARGE SCALE ANALYSIS]</scope>
</reference>
<reference key="19">
    <citation type="journal article" date="2014" name="Curr. Opin. Struct. Biol.">
        <title>A new system for naming ribosomal proteins.</title>
        <authorList>
            <person name="Ban N."/>
            <person name="Beckmann R."/>
            <person name="Cate J.H.D."/>
            <person name="Dinman J.D."/>
            <person name="Dragon F."/>
            <person name="Ellis S.R."/>
            <person name="Lafontaine D.L.J."/>
            <person name="Lindahl L."/>
            <person name="Liljas A."/>
            <person name="Lipton J.M."/>
            <person name="McAlear M.A."/>
            <person name="Moore P.B."/>
            <person name="Noller H.F."/>
            <person name="Ortega J."/>
            <person name="Panse V.G."/>
            <person name="Ramakrishnan V."/>
            <person name="Spahn C.M.T."/>
            <person name="Steitz T.A."/>
            <person name="Tchorzewski M."/>
            <person name="Tollervey D."/>
            <person name="Warren A.J."/>
            <person name="Williamson J.R."/>
            <person name="Wilson D."/>
            <person name="Yonath A."/>
            <person name="Yusupov M."/>
        </authorList>
    </citation>
    <scope>NOMENCLATURE</scope>
</reference>
<reference key="20">
    <citation type="journal article" date="2015" name="Proteomics">
        <title>N-terminome analysis of the human mitochondrial proteome.</title>
        <authorList>
            <person name="Vaca Jacome A.S."/>
            <person name="Rabilloud T."/>
            <person name="Schaeffer-Reiss C."/>
            <person name="Rompais M."/>
            <person name="Ayoub D."/>
            <person name="Lane L."/>
            <person name="Bairoch A."/>
            <person name="Van Dorsselaer A."/>
            <person name="Carapito C."/>
        </authorList>
    </citation>
    <scope>IDENTIFICATION BY MASS SPECTROMETRY [LARGE SCALE ANALYSIS]</scope>
</reference>
<reference key="21">
    <citation type="journal article" date="2017" name="Nat. Struct. Mol. Biol.">
        <title>Site-specific mapping of the human SUMO proteome reveals co-modification with phosphorylation.</title>
        <authorList>
            <person name="Hendriks I.A."/>
            <person name="Lyon D."/>
            <person name="Young C."/>
            <person name="Jensen L.J."/>
            <person name="Vertegaal A.C."/>
            <person name="Nielsen M.L."/>
        </authorList>
    </citation>
    <scope>SUMOYLATION [LARGE SCALE ANALYSIS] AT LYS-37</scope>
    <scope>IDENTIFICATION BY MASS SPECTROMETRY [LARGE SCALE ANALYSIS]</scope>
</reference>
<reference key="22">
    <citation type="journal article" date="2013" name="Nature">
        <title>Structures of the human and Drosophila 80S ribosome.</title>
        <authorList>
            <person name="Anger A.M."/>
            <person name="Armache J.P."/>
            <person name="Berninghausen O."/>
            <person name="Habeck M."/>
            <person name="Subklewe M."/>
            <person name="Wilson D.N."/>
            <person name="Beckmann R."/>
        </authorList>
    </citation>
    <scope>STRUCTURE BY ELECTRON MICROSCOPY (5.0 ANGSTROMS) OF 80S RIBOSOME</scope>
    <scope>FUNCTION</scope>
    <scope>SUBUNIT</scope>
    <scope>SUBCELLULAR LOCATION</scope>
</reference>
<reference evidence="14 15 16" key="23">
    <citation type="journal article" date="2021" name="Science">
        <title>Nucleolar maturation of the human small subunit processome.</title>
        <authorList>
            <person name="Singh S."/>
            <person name="Vanden Broeck A."/>
            <person name="Miller L."/>
            <person name="Chaker-Margot M."/>
            <person name="Klinge S."/>
        </authorList>
    </citation>
    <scope>STRUCTURE BY ELECTRON MICROSCOPY (2.70 ANGSTROMS)</scope>
    <scope>FUNCTION</scope>
    <scope>SUBUNIT</scope>
    <scope>SUBCELLULAR LOCATION</scope>
</reference>
<gene>
    <name evidence="13" type="primary">RPS24</name>
</gene>
<protein>
    <recommendedName>
        <fullName evidence="10">Small ribosomal subunit protein eS24</fullName>
    </recommendedName>
    <alternativeName>
        <fullName>40S ribosomal protein S24</fullName>
    </alternativeName>
</protein>
<dbReference type="EMBL" id="M31520">
    <property type="protein sequence ID" value="AAA36588.1"/>
    <property type="molecule type" value="mRNA"/>
</dbReference>
<dbReference type="EMBL" id="U12202">
    <property type="protein sequence ID" value="AAB08007.1"/>
    <property type="molecule type" value="Genomic_DNA"/>
</dbReference>
<dbReference type="EMBL" id="U12202">
    <property type="protein sequence ID" value="AAB08006.1"/>
    <property type="molecule type" value="Genomic_DNA"/>
</dbReference>
<dbReference type="EMBL" id="BX336465">
    <property type="status" value="NOT_ANNOTATED_CDS"/>
    <property type="molecule type" value="mRNA"/>
</dbReference>
<dbReference type="EMBL" id="AK311776">
    <property type="protein sequence ID" value="BAG34719.1"/>
    <property type="molecule type" value="mRNA"/>
</dbReference>
<dbReference type="EMBL" id="AK311910">
    <property type="protein sequence ID" value="BAG34851.1"/>
    <property type="molecule type" value="mRNA"/>
</dbReference>
<dbReference type="EMBL" id="BX537975">
    <property type="protein sequence ID" value="CAD97939.1"/>
    <property type="molecule type" value="mRNA"/>
</dbReference>
<dbReference type="EMBL" id="AL512628">
    <property type="status" value="NOT_ANNOTATED_CDS"/>
    <property type="molecule type" value="Genomic_DNA"/>
</dbReference>
<dbReference type="EMBL" id="CH471083">
    <property type="protein sequence ID" value="EAW54623.1"/>
    <property type="molecule type" value="Genomic_DNA"/>
</dbReference>
<dbReference type="EMBL" id="CH471083">
    <property type="protein sequence ID" value="EAW54625.1"/>
    <property type="molecule type" value="Genomic_DNA"/>
</dbReference>
<dbReference type="EMBL" id="BC000523">
    <property type="protein sequence ID" value="AAH00523.1"/>
    <property type="molecule type" value="mRNA"/>
</dbReference>
<dbReference type="EMBL" id="BC003149">
    <property type="status" value="NOT_ANNOTATED_CDS"/>
    <property type="molecule type" value="mRNA"/>
</dbReference>
<dbReference type="EMBL" id="BC071926">
    <property type="protein sequence ID" value="AAH71926.1"/>
    <property type="molecule type" value="mRNA"/>
</dbReference>
<dbReference type="CCDS" id="CCDS44443.1">
    <molecule id="P62847-4"/>
</dbReference>
<dbReference type="CCDS" id="CCDS7355.1"/>
<dbReference type="CCDS" id="CCDS7356.1">
    <molecule id="P62847-2"/>
</dbReference>
<dbReference type="CCDS" id="CCDS86122.1">
    <molecule id="P62847-3"/>
</dbReference>
<dbReference type="PIR" id="JC4671">
    <property type="entry name" value="JC4671"/>
</dbReference>
<dbReference type="PIR" id="JH0213">
    <property type="entry name" value="JH0213"/>
</dbReference>
<dbReference type="RefSeq" id="NP_001017.1">
    <molecule id="P62847-1"/>
    <property type="nucleotide sequence ID" value="NM_001026.5"/>
</dbReference>
<dbReference type="RefSeq" id="NP_001135755.1">
    <molecule id="P62847-3"/>
    <property type="nucleotide sequence ID" value="NM_001142283.2"/>
</dbReference>
<dbReference type="RefSeq" id="NP_001135757.1">
    <molecule id="P62847-4"/>
    <property type="nucleotide sequence ID" value="NM_001142285.2"/>
</dbReference>
<dbReference type="RefSeq" id="NP_148982.1">
    <molecule id="P62847-2"/>
    <property type="nucleotide sequence ID" value="NM_033022.4"/>
</dbReference>
<dbReference type="PDB" id="4UG0">
    <property type="method" value="EM"/>
    <property type="chains" value="SY=1-133"/>
</dbReference>
<dbReference type="PDB" id="4V6X">
    <property type="method" value="EM"/>
    <property type="resolution" value="5.00 A"/>
    <property type="chains" value="AY=1-133"/>
</dbReference>
<dbReference type="PDB" id="5A2Q">
    <property type="method" value="EM"/>
    <property type="resolution" value="3.90 A"/>
    <property type="chains" value="Y=1-130"/>
</dbReference>
<dbReference type="PDB" id="5AJ0">
    <property type="method" value="EM"/>
    <property type="resolution" value="3.50 A"/>
    <property type="chains" value="BY=1-133"/>
</dbReference>
<dbReference type="PDB" id="5FLX">
    <property type="method" value="EM"/>
    <property type="resolution" value="3.90 A"/>
    <property type="chains" value="Y=1-133"/>
</dbReference>
<dbReference type="PDB" id="5LKS">
    <property type="method" value="EM"/>
    <property type="resolution" value="3.60 A"/>
    <property type="chains" value="SY=1-133"/>
</dbReference>
<dbReference type="PDB" id="5OA3">
    <property type="method" value="EM"/>
    <property type="resolution" value="4.30 A"/>
    <property type="chains" value="Y=1-130"/>
</dbReference>
<dbReference type="PDB" id="5T2C">
    <property type="method" value="EM"/>
    <property type="resolution" value="3.60 A"/>
    <property type="chains" value="AQ=1-133"/>
</dbReference>
<dbReference type="PDB" id="5VYC">
    <property type="method" value="X-ray"/>
    <property type="resolution" value="6.00 A"/>
    <property type="chains" value="Y1/Y2/Y3/Y4/Y5/Y6=1-133"/>
</dbReference>
<dbReference type="PDB" id="6FEC">
    <property type="method" value="EM"/>
    <property type="resolution" value="6.30 A"/>
    <property type="chains" value="s=3-133"/>
</dbReference>
<dbReference type="PDB" id="6G18">
    <property type="method" value="EM"/>
    <property type="resolution" value="3.60 A"/>
    <property type="chains" value="Y=1-133"/>
</dbReference>
<dbReference type="PDB" id="6G4S">
    <property type="method" value="EM"/>
    <property type="resolution" value="4.00 A"/>
    <property type="chains" value="Y=1-133"/>
</dbReference>
<dbReference type="PDB" id="6G4W">
    <property type="method" value="EM"/>
    <property type="resolution" value="4.50 A"/>
    <property type="chains" value="Y=1-133"/>
</dbReference>
<dbReference type="PDB" id="6G51">
    <property type="method" value="EM"/>
    <property type="resolution" value="4.10 A"/>
    <property type="chains" value="Y=1-133"/>
</dbReference>
<dbReference type="PDB" id="6G53">
    <property type="method" value="EM"/>
    <property type="resolution" value="4.50 A"/>
    <property type="chains" value="Y=1-133"/>
</dbReference>
<dbReference type="PDB" id="6G5H">
    <property type="method" value="EM"/>
    <property type="resolution" value="3.60 A"/>
    <property type="chains" value="Y=1-133"/>
</dbReference>
<dbReference type="PDB" id="6G5I">
    <property type="method" value="EM"/>
    <property type="resolution" value="3.50 A"/>
    <property type="chains" value="Y=1-133"/>
</dbReference>
<dbReference type="PDB" id="6IP5">
    <property type="method" value="EM"/>
    <property type="resolution" value="3.90 A"/>
    <property type="chains" value="3N=1-133"/>
</dbReference>
<dbReference type="PDB" id="6IP6">
    <property type="method" value="EM"/>
    <property type="resolution" value="4.50 A"/>
    <property type="chains" value="3N=1-133"/>
</dbReference>
<dbReference type="PDB" id="6IP8">
    <property type="method" value="EM"/>
    <property type="resolution" value="3.90 A"/>
    <property type="chains" value="3N=1-133"/>
</dbReference>
<dbReference type="PDB" id="6MTD">
    <property type="method" value="EM"/>
    <property type="resolution" value="3.30 A"/>
    <property type="chains" value="YY=4-127"/>
</dbReference>
<dbReference type="PDB" id="6MTE">
    <property type="method" value="EM"/>
    <property type="resolution" value="3.40 A"/>
    <property type="chains" value="YY=4-127"/>
</dbReference>
<dbReference type="PDB" id="6OLE">
    <property type="method" value="EM"/>
    <property type="resolution" value="3.10 A"/>
    <property type="chains" value="SY=2-132"/>
</dbReference>
<dbReference type="PDB" id="6OLF">
    <property type="method" value="EM"/>
    <property type="resolution" value="3.90 A"/>
    <property type="chains" value="SY=2-132"/>
</dbReference>
<dbReference type="PDB" id="6OLG">
    <property type="method" value="EM"/>
    <property type="resolution" value="3.40 A"/>
    <property type="chains" value="BY=4-128"/>
</dbReference>
<dbReference type="PDB" id="6OLI">
    <property type="method" value="EM"/>
    <property type="resolution" value="3.50 A"/>
    <property type="chains" value="SY=2-132"/>
</dbReference>
<dbReference type="PDB" id="6OLZ">
    <property type="method" value="EM"/>
    <property type="resolution" value="3.90 A"/>
    <property type="chains" value="BY=4-128"/>
</dbReference>
<dbReference type="PDB" id="6OM0">
    <property type="method" value="EM"/>
    <property type="resolution" value="3.10 A"/>
    <property type="chains" value="SY=2-132"/>
</dbReference>
<dbReference type="PDB" id="6OM7">
    <property type="method" value="EM"/>
    <property type="resolution" value="3.70 A"/>
    <property type="chains" value="SY=2-132"/>
</dbReference>
<dbReference type="PDB" id="6QZP">
    <property type="method" value="EM"/>
    <property type="resolution" value="2.90 A"/>
    <property type="chains" value="SY=2-132"/>
</dbReference>
<dbReference type="PDB" id="6XA1">
    <property type="method" value="EM"/>
    <property type="resolution" value="2.80 A"/>
    <property type="chains" value="SY=4-125"/>
</dbReference>
<dbReference type="PDB" id="6Y0G">
    <property type="method" value="EM"/>
    <property type="resolution" value="3.20 A"/>
    <property type="chains" value="SY=1-133"/>
</dbReference>
<dbReference type="PDB" id="6Y2L">
    <property type="method" value="EM"/>
    <property type="resolution" value="3.00 A"/>
    <property type="chains" value="SY=1-133"/>
</dbReference>
<dbReference type="PDB" id="6Y57">
    <property type="method" value="EM"/>
    <property type="resolution" value="3.50 A"/>
    <property type="chains" value="SY=1-133"/>
</dbReference>
<dbReference type="PDB" id="6YBW">
    <property type="method" value="EM"/>
    <property type="resolution" value="3.10 A"/>
    <property type="chains" value="T=1-133"/>
</dbReference>
<dbReference type="PDB" id="6Z6L">
    <property type="method" value="EM"/>
    <property type="resolution" value="3.00 A"/>
    <property type="chains" value="SY=1-133"/>
</dbReference>
<dbReference type="PDB" id="6Z6M">
    <property type="method" value="EM"/>
    <property type="resolution" value="3.10 A"/>
    <property type="chains" value="SY=1-133"/>
</dbReference>
<dbReference type="PDB" id="6Z6N">
    <property type="method" value="EM"/>
    <property type="resolution" value="2.90 A"/>
    <property type="chains" value="SY=1-133"/>
</dbReference>
<dbReference type="PDB" id="6ZLW">
    <property type="method" value="EM"/>
    <property type="resolution" value="2.60 A"/>
    <property type="chains" value="Y=1-133"/>
</dbReference>
<dbReference type="PDB" id="6ZM7">
    <property type="method" value="EM"/>
    <property type="resolution" value="2.70 A"/>
    <property type="chains" value="SY=1-133"/>
</dbReference>
<dbReference type="PDB" id="6ZME">
    <property type="method" value="EM"/>
    <property type="resolution" value="3.00 A"/>
    <property type="chains" value="SY=1-133"/>
</dbReference>
<dbReference type="PDB" id="6ZMI">
    <property type="method" value="EM"/>
    <property type="resolution" value="2.60 A"/>
    <property type="chains" value="SY=1-133"/>
</dbReference>
<dbReference type="PDB" id="6ZMO">
    <property type="method" value="EM"/>
    <property type="resolution" value="3.10 A"/>
    <property type="chains" value="SY=1-133"/>
</dbReference>
<dbReference type="PDB" id="6ZMT">
    <property type="method" value="EM"/>
    <property type="resolution" value="3.00 A"/>
    <property type="chains" value="Y=1-133"/>
</dbReference>
<dbReference type="PDB" id="6ZMW">
    <property type="method" value="EM"/>
    <property type="resolution" value="3.70 A"/>
    <property type="chains" value="T=1-133"/>
</dbReference>
<dbReference type="PDB" id="6ZN5">
    <property type="method" value="EM"/>
    <property type="resolution" value="3.20 A"/>
    <property type="chains" value="Y=3-126"/>
</dbReference>
<dbReference type="PDB" id="6ZOJ">
    <property type="method" value="EM"/>
    <property type="resolution" value="2.80 A"/>
    <property type="chains" value="Y=1-130"/>
</dbReference>
<dbReference type="PDB" id="6ZOK">
    <property type="method" value="EM"/>
    <property type="resolution" value="2.80 A"/>
    <property type="chains" value="Y=1-130"/>
</dbReference>
<dbReference type="PDB" id="6ZON">
    <property type="method" value="EM"/>
    <property type="resolution" value="3.00 A"/>
    <property type="chains" value="z=1-133"/>
</dbReference>
<dbReference type="PDB" id="6ZP4">
    <property type="method" value="EM"/>
    <property type="resolution" value="2.90 A"/>
    <property type="chains" value="z=1-133"/>
</dbReference>
<dbReference type="PDB" id="6ZUO">
    <property type="method" value="EM"/>
    <property type="resolution" value="3.10 A"/>
    <property type="chains" value="Y=1-133"/>
</dbReference>
<dbReference type="PDB" id="6ZV6">
    <property type="method" value="EM"/>
    <property type="resolution" value="2.90 A"/>
    <property type="chains" value="Y=1-133"/>
</dbReference>
<dbReference type="PDB" id="6ZVH">
    <property type="method" value="EM"/>
    <property type="resolution" value="2.90 A"/>
    <property type="chains" value="Y=2-132"/>
</dbReference>
<dbReference type="PDB" id="6ZXD">
    <property type="method" value="EM"/>
    <property type="resolution" value="3.20 A"/>
    <property type="chains" value="Y=1-133"/>
</dbReference>
<dbReference type="PDB" id="6ZXE">
    <property type="method" value="EM"/>
    <property type="resolution" value="3.00 A"/>
    <property type="chains" value="Y=1-133"/>
</dbReference>
<dbReference type="PDB" id="6ZXF">
    <property type="method" value="EM"/>
    <property type="resolution" value="3.70 A"/>
    <property type="chains" value="Y=1-133"/>
</dbReference>
<dbReference type="PDB" id="6ZXG">
    <property type="method" value="EM"/>
    <property type="resolution" value="2.60 A"/>
    <property type="chains" value="Y=1-133"/>
</dbReference>
<dbReference type="PDB" id="6ZXH">
    <property type="method" value="EM"/>
    <property type="resolution" value="2.70 A"/>
    <property type="chains" value="Y=1-133"/>
</dbReference>
<dbReference type="PDB" id="7K5I">
    <property type="method" value="EM"/>
    <property type="resolution" value="2.90 A"/>
    <property type="chains" value="Y=1-133"/>
</dbReference>
<dbReference type="PDB" id="7MQ8">
    <property type="method" value="EM"/>
    <property type="resolution" value="3.60 A"/>
    <property type="chains" value="LF=1-133"/>
</dbReference>
<dbReference type="PDB" id="7MQ9">
    <property type="method" value="EM"/>
    <property type="resolution" value="3.87 A"/>
    <property type="chains" value="LF=1-133"/>
</dbReference>
<dbReference type="PDB" id="7MQA">
    <property type="method" value="EM"/>
    <property type="resolution" value="2.70 A"/>
    <property type="chains" value="LF=1-133"/>
</dbReference>
<dbReference type="PDB" id="7QP6">
    <property type="method" value="EM"/>
    <property type="resolution" value="4.70 A"/>
    <property type="chains" value="T=1-133"/>
</dbReference>
<dbReference type="PDB" id="7QP7">
    <property type="method" value="EM"/>
    <property type="resolution" value="3.70 A"/>
    <property type="chains" value="T=1-133"/>
</dbReference>
<dbReference type="PDB" id="7QVP">
    <property type="method" value="EM"/>
    <property type="resolution" value="3.00 A"/>
    <property type="chains" value="RY/SY=1-133"/>
</dbReference>
<dbReference type="PDB" id="7R4X">
    <property type="method" value="EM"/>
    <property type="resolution" value="2.15 A"/>
    <property type="chains" value="Y=1-133"/>
</dbReference>
<dbReference type="PDB" id="7TQL">
    <property type="method" value="EM"/>
    <property type="resolution" value="3.40 A"/>
    <property type="chains" value="Y=4-126"/>
</dbReference>
<dbReference type="PDB" id="7WTS">
    <property type="method" value="EM"/>
    <property type="resolution" value="3.20 A"/>
    <property type="chains" value="Y=1-133"/>
</dbReference>
<dbReference type="PDB" id="7WTT">
    <property type="method" value="EM"/>
    <property type="resolution" value="3.10 A"/>
    <property type="chains" value="Y=1-133"/>
</dbReference>
<dbReference type="PDB" id="7WTU">
    <property type="method" value="EM"/>
    <property type="resolution" value="3.00 A"/>
    <property type="chains" value="Y=1-133"/>
</dbReference>
<dbReference type="PDB" id="7WTV">
    <property type="method" value="EM"/>
    <property type="resolution" value="3.50 A"/>
    <property type="chains" value="Y=1-133"/>
</dbReference>
<dbReference type="PDB" id="7WTW">
    <property type="method" value="EM"/>
    <property type="resolution" value="3.20 A"/>
    <property type="chains" value="Y=1-133"/>
</dbReference>
<dbReference type="PDB" id="7WTX">
    <property type="method" value="EM"/>
    <property type="resolution" value="3.10 A"/>
    <property type="chains" value="Y=1-133"/>
</dbReference>
<dbReference type="PDB" id="7WTZ">
    <property type="method" value="EM"/>
    <property type="resolution" value="3.00 A"/>
    <property type="chains" value="Y=1-133"/>
</dbReference>
<dbReference type="PDB" id="7WU0">
    <property type="method" value="EM"/>
    <property type="resolution" value="3.30 A"/>
    <property type="chains" value="Y=1-133"/>
</dbReference>
<dbReference type="PDB" id="7XNX">
    <property type="method" value="EM"/>
    <property type="resolution" value="2.70 A"/>
    <property type="chains" value="SY=1-133"/>
</dbReference>
<dbReference type="PDB" id="7XNY">
    <property type="method" value="EM"/>
    <property type="resolution" value="2.50 A"/>
    <property type="chains" value="SY=1-133"/>
</dbReference>
<dbReference type="PDB" id="8G5Y">
    <property type="method" value="EM"/>
    <property type="resolution" value="2.29 A"/>
    <property type="chains" value="SY=1-133"/>
</dbReference>
<dbReference type="PDB" id="8G5Z">
    <property type="method" value="EM"/>
    <property type="resolution" value="2.64 A"/>
    <property type="chains" value="SY=2-132"/>
</dbReference>
<dbReference type="PDB" id="8G60">
    <property type="method" value="EM"/>
    <property type="resolution" value="2.54 A"/>
    <property type="chains" value="SY=1-133"/>
</dbReference>
<dbReference type="PDB" id="8G61">
    <property type="method" value="EM"/>
    <property type="resolution" value="2.94 A"/>
    <property type="chains" value="SY=1-133"/>
</dbReference>
<dbReference type="PDB" id="8G6J">
    <property type="method" value="EM"/>
    <property type="resolution" value="2.80 A"/>
    <property type="chains" value="SY=1-133"/>
</dbReference>
<dbReference type="PDB" id="8GLP">
    <property type="method" value="EM"/>
    <property type="resolution" value="1.67 A"/>
    <property type="chains" value="SY=1-133"/>
</dbReference>
<dbReference type="PDB" id="8IFD">
    <property type="method" value="EM"/>
    <property type="resolution" value="2.59 A"/>
    <property type="chains" value="3N=1-133"/>
</dbReference>
<dbReference type="PDB" id="8IFE">
    <property type="method" value="EM"/>
    <property type="resolution" value="2.57 A"/>
    <property type="chains" value="3N=1-133"/>
</dbReference>
<dbReference type="PDB" id="8JDJ">
    <property type="method" value="EM"/>
    <property type="resolution" value="2.50 A"/>
    <property type="chains" value="AK=1-133"/>
</dbReference>
<dbReference type="PDB" id="8JDK">
    <property type="method" value="EM"/>
    <property type="resolution" value="2.26 A"/>
    <property type="chains" value="AK=1-133"/>
</dbReference>
<dbReference type="PDB" id="8JDL">
    <property type="method" value="EM"/>
    <property type="resolution" value="2.42 A"/>
    <property type="chains" value="AK=1-133"/>
</dbReference>
<dbReference type="PDB" id="8JDM">
    <property type="method" value="EM"/>
    <property type="resolution" value="2.67 A"/>
    <property type="chains" value="AK=1-133"/>
</dbReference>
<dbReference type="PDB" id="8K2C">
    <property type="method" value="EM"/>
    <property type="resolution" value="2.40 A"/>
    <property type="chains" value="SY=1-133"/>
</dbReference>
<dbReference type="PDB" id="8OZ0">
    <property type="method" value="EM"/>
    <property type="resolution" value="3.50 A"/>
    <property type="chains" value="e=1-133"/>
</dbReference>
<dbReference type="PDB" id="8PJ1">
    <property type="method" value="EM"/>
    <property type="resolution" value="3.40 A"/>
    <property type="chains" value="T=1-133"/>
</dbReference>
<dbReference type="PDB" id="8PJ2">
    <property type="method" value="EM"/>
    <property type="resolution" value="3.40 A"/>
    <property type="chains" value="T=1-133"/>
</dbReference>
<dbReference type="PDB" id="8PJ3">
    <property type="method" value="EM"/>
    <property type="resolution" value="3.70 A"/>
    <property type="chains" value="T=1-133"/>
</dbReference>
<dbReference type="PDB" id="8PJ4">
    <property type="method" value="EM"/>
    <property type="resolution" value="3.20 A"/>
    <property type="chains" value="T=1-133"/>
</dbReference>
<dbReference type="PDB" id="8PJ5">
    <property type="method" value="EM"/>
    <property type="resolution" value="2.90 A"/>
    <property type="chains" value="T=1-133"/>
</dbReference>
<dbReference type="PDB" id="8PJ6">
    <property type="method" value="EM"/>
    <property type="resolution" value="2.90 A"/>
    <property type="chains" value="T=1-133"/>
</dbReference>
<dbReference type="PDB" id="8PPK">
    <property type="method" value="EM"/>
    <property type="resolution" value="2.98 A"/>
    <property type="chains" value="Y=1-133"/>
</dbReference>
<dbReference type="PDB" id="8PPL">
    <property type="method" value="EM"/>
    <property type="resolution" value="2.65 A"/>
    <property type="chains" value="AY=1-133"/>
</dbReference>
<dbReference type="PDB" id="8QOI">
    <property type="method" value="EM"/>
    <property type="resolution" value="1.90 A"/>
    <property type="chains" value="SY=1-133"/>
</dbReference>
<dbReference type="PDB" id="8T4S">
    <property type="method" value="EM"/>
    <property type="resolution" value="2.60 A"/>
    <property type="chains" value="Y=1-133"/>
</dbReference>
<dbReference type="PDB" id="8UKB">
    <property type="method" value="EM"/>
    <property type="resolution" value="3.05 A"/>
    <property type="chains" value="SY=2-132"/>
</dbReference>
<dbReference type="PDB" id="8XP2">
    <property type="method" value="EM"/>
    <property type="resolution" value="3.20 A"/>
    <property type="chains" value="SY=1-133"/>
</dbReference>
<dbReference type="PDB" id="8XP3">
    <property type="method" value="EM"/>
    <property type="resolution" value="3.40 A"/>
    <property type="chains" value="SY=1-133"/>
</dbReference>
<dbReference type="PDB" id="8XSX">
    <property type="method" value="EM"/>
    <property type="resolution" value="2.40 A"/>
    <property type="chains" value="SY=1-133"/>
</dbReference>
<dbReference type="PDB" id="8XSY">
    <property type="method" value="EM"/>
    <property type="resolution" value="3.00 A"/>
    <property type="chains" value="SY=1-133"/>
</dbReference>
<dbReference type="PDB" id="8XSZ">
    <property type="method" value="EM"/>
    <property type="resolution" value="3.20 A"/>
    <property type="chains" value="SY=1-133"/>
</dbReference>
<dbReference type="PDB" id="8XXL">
    <property type="method" value="EM"/>
    <property type="resolution" value="2.90 A"/>
    <property type="chains" value="SY=1-133"/>
</dbReference>
<dbReference type="PDB" id="8XXM">
    <property type="method" value="EM"/>
    <property type="resolution" value="3.20 A"/>
    <property type="chains" value="SY=1-133"/>
</dbReference>
<dbReference type="PDB" id="8XXN">
    <property type="method" value="EM"/>
    <property type="resolution" value="3.60 A"/>
    <property type="chains" value="SY=1-133"/>
</dbReference>
<dbReference type="PDB" id="8Y0W">
    <property type="method" value="EM"/>
    <property type="resolution" value="3.40 A"/>
    <property type="chains" value="SY=1-133"/>
</dbReference>
<dbReference type="PDB" id="8Y0X">
    <property type="method" value="EM"/>
    <property type="resolution" value="3.30 A"/>
    <property type="chains" value="SY=1-133"/>
</dbReference>
<dbReference type="PDB" id="8YOO">
    <property type="method" value="EM"/>
    <property type="resolution" value="2.00 A"/>
    <property type="chains" value="SY=1-133"/>
</dbReference>
<dbReference type="PDB" id="8YOP">
    <property type="method" value="EM"/>
    <property type="resolution" value="2.20 A"/>
    <property type="chains" value="SY=1-133"/>
</dbReference>
<dbReference type="PDB" id="8ZDB">
    <property type="method" value="EM"/>
    <property type="resolution" value="3.60 A"/>
    <property type="chains" value="Y=1-133"/>
</dbReference>
<dbReference type="PDB" id="8ZDC">
    <property type="method" value="EM"/>
    <property type="resolution" value="3.80 A"/>
    <property type="chains" value="Y=1-133"/>
</dbReference>
<dbReference type="PDB" id="8ZDD">
    <property type="method" value="EM"/>
    <property type="resolution" value="3.70 A"/>
    <property type="chains" value="Y=1-133"/>
</dbReference>
<dbReference type="PDB" id="9BKD">
    <property type="method" value="EM"/>
    <property type="resolution" value="2.60 A"/>
    <property type="chains" value="T=1-133"/>
</dbReference>
<dbReference type="PDB" id="9BLN">
    <property type="method" value="EM"/>
    <property type="resolution" value="3.90 A"/>
    <property type="chains" value="T=1-133"/>
</dbReference>
<dbReference type="PDB" id="9C3H">
    <property type="method" value="EM"/>
    <property type="resolution" value="2.00 A"/>
    <property type="chains" value="SY=1-132"/>
</dbReference>
<dbReference type="PDB" id="9G8M">
    <property type="method" value="EM"/>
    <property type="resolution" value="3.30 A"/>
    <property type="chains" value="SY=1-133"/>
</dbReference>
<dbReference type="PDB" id="9G8O">
    <property type="method" value="EM"/>
    <property type="resolution" value="3.40 A"/>
    <property type="chains" value="SY=1-133"/>
</dbReference>
<dbReference type="PDBsum" id="4UG0"/>
<dbReference type="PDBsum" id="4V6X"/>
<dbReference type="PDBsum" id="5A2Q"/>
<dbReference type="PDBsum" id="5AJ0"/>
<dbReference type="PDBsum" id="5FLX"/>
<dbReference type="PDBsum" id="5LKS"/>
<dbReference type="PDBsum" id="5OA3"/>
<dbReference type="PDBsum" id="5T2C"/>
<dbReference type="PDBsum" id="5VYC"/>
<dbReference type="PDBsum" id="6FEC"/>
<dbReference type="PDBsum" id="6G18"/>
<dbReference type="PDBsum" id="6G4S"/>
<dbReference type="PDBsum" id="6G4W"/>
<dbReference type="PDBsum" id="6G51"/>
<dbReference type="PDBsum" id="6G53"/>
<dbReference type="PDBsum" id="6G5H"/>
<dbReference type="PDBsum" id="6G5I"/>
<dbReference type="PDBsum" id="6IP5"/>
<dbReference type="PDBsum" id="6IP6"/>
<dbReference type="PDBsum" id="6IP8"/>
<dbReference type="PDBsum" id="6MTD"/>
<dbReference type="PDBsum" id="6MTE"/>
<dbReference type="PDBsum" id="6OLE"/>
<dbReference type="PDBsum" id="6OLF"/>
<dbReference type="PDBsum" id="6OLG"/>
<dbReference type="PDBsum" id="6OLI"/>
<dbReference type="PDBsum" id="6OLZ"/>
<dbReference type="PDBsum" id="6OM0"/>
<dbReference type="PDBsum" id="6OM7"/>
<dbReference type="PDBsum" id="6QZP"/>
<dbReference type="PDBsum" id="6XA1"/>
<dbReference type="PDBsum" id="6Y0G"/>
<dbReference type="PDBsum" id="6Y2L"/>
<dbReference type="PDBsum" id="6Y57"/>
<dbReference type="PDBsum" id="6YBW"/>
<dbReference type="PDBsum" id="6Z6L"/>
<dbReference type="PDBsum" id="6Z6M"/>
<dbReference type="PDBsum" id="6Z6N"/>
<dbReference type="PDBsum" id="6ZLW"/>
<dbReference type="PDBsum" id="6ZM7"/>
<dbReference type="PDBsum" id="6ZME"/>
<dbReference type="PDBsum" id="6ZMI"/>
<dbReference type="PDBsum" id="6ZMO"/>
<dbReference type="PDBsum" id="6ZMT"/>
<dbReference type="PDBsum" id="6ZMW"/>
<dbReference type="PDBsum" id="6ZN5"/>
<dbReference type="PDBsum" id="6ZOJ"/>
<dbReference type="PDBsum" id="6ZOK"/>
<dbReference type="PDBsum" id="6ZON"/>
<dbReference type="PDBsum" id="6ZP4"/>
<dbReference type="PDBsum" id="6ZUO"/>
<dbReference type="PDBsum" id="6ZV6"/>
<dbReference type="PDBsum" id="6ZVH"/>
<dbReference type="PDBsum" id="6ZXD"/>
<dbReference type="PDBsum" id="6ZXE"/>
<dbReference type="PDBsum" id="6ZXF"/>
<dbReference type="PDBsum" id="6ZXG"/>
<dbReference type="PDBsum" id="6ZXH"/>
<dbReference type="PDBsum" id="7K5I"/>
<dbReference type="PDBsum" id="7MQ8"/>
<dbReference type="PDBsum" id="7MQ9"/>
<dbReference type="PDBsum" id="7MQA"/>
<dbReference type="PDBsum" id="7QP6"/>
<dbReference type="PDBsum" id="7QP7"/>
<dbReference type="PDBsum" id="7QVP"/>
<dbReference type="PDBsum" id="7R4X"/>
<dbReference type="PDBsum" id="7TQL"/>
<dbReference type="PDBsum" id="7WTS"/>
<dbReference type="PDBsum" id="7WTT"/>
<dbReference type="PDBsum" id="7WTU"/>
<dbReference type="PDBsum" id="7WTV"/>
<dbReference type="PDBsum" id="7WTW"/>
<dbReference type="PDBsum" id="7WTX"/>
<dbReference type="PDBsum" id="7WTZ"/>
<dbReference type="PDBsum" id="7WU0"/>
<dbReference type="PDBsum" id="7XNX"/>
<dbReference type="PDBsum" id="7XNY"/>
<dbReference type="PDBsum" id="8G5Y"/>
<dbReference type="PDBsum" id="8G5Z"/>
<dbReference type="PDBsum" id="8G60"/>
<dbReference type="PDBsum" id="8G61"/>
<dbReference type="PDBsum" id="8G6J"/>
<dbReference type="PDBsum" id="8GLP"/>
<dbReference type="PDBsum" id="8IFD"/>
<dbReference type="PDBsum" id="8IFE"/>
<dbReference type="PDBsum" id="8JDJ"/>
<dbReference type="PDBsum" id="8JDK"/>
<dbReference type="PDBsum" id="8JDL"/>
<dbReference type="PDBsum" id="8JDM"/>
<dbReference type="PDBsum" id="8K2C"/>
<dbReference type="PDBsum" id="8OZ0"/>
<dbReference type="PDBsum" id="8PJ1"/>
<dbReference type="PDBsum" id="8PJ2"/>
<dbReference type="PDBsum" id="8PJ3"/>
<dbReference type="PDBsum" id="8PJ4"/>
<dbReference type="PDBsum" id="8PJ5"/>
<dbReference type="PDBsum" id="8PJ6"/>
<dbReference type="PDBsum" id="8PPK"/>
<dbReference type="PDBsum" id="8PPL"/>
<dbReference type="PDBsum" id="8QOI"/>
<dbReference type="PDBsum" id="8T4S"/>
<dbReference type="PDBsum" id="8UKB"/>
<dbReference type="PDBsum" id="8XP2"/>
<dbReference type="PDBsum" id="8XP3"/>
<dbReference type="PDBsum" id="8XSX"/>
<dbReference type="PDBsum" id="8XSY"/>
<dbReference type="PDBsum" id="8XSZ"/>
<dbReference type="PDBsum" id="8XXL"/>
<dbReference type="PDBsum" id="8XXM"/>
<dbReference type="PDBsum" id="8XXN"/>
<dbReference type="PDBsum" id="8Y0W"/>
<dbReference type="PDBsum" id="8Y0X"/>
<dbReference type="PDBsum" id="8YOO"/>
<dbReference type="PDBsum" id="8YOP"/>
<dbReference type="PDBsum" id="8ZDB"/>
<dbReference type="PDBsum" id="8ZDC"/>
<dbReference type="PDBsum" id="8ZDD"/>
<dbReference type="PDBsum" id="9BKD"/>
<dbReference type="PDBsum" id="9BLN"/>
<dbReference type="PDBsum" id="9C3H"/>
<dbReference type="PDBsum" id="9G8M"/>
<dbReference type="PDBsum" id="9G8O"/>
<dbReference type="EMDB" id="EMD-10668"/>
<dbReference type="EMDB" id="EMD-10674"/>
<dbReference type="EMDB" id="EMD-10690"/>
<dbReference type="EMDB" id="EMD-10775"/>
<dbReference type="EMDB" id="EMD-11098"/>
<dbReference type="EMDB" id="EMD-11099"/>
<dbReference type="EMDB" id="EMD-11100"/>
<dbReference type="EMDB" id="EMD-11276"/>
<dbReference type="EMDB" id="EMD-11288"/>
<dbReference type="EMDB" id="EMD-11289"/>
<dbReference type="EMDB" id="EMD-11292"/>
<dbReference type="EMDB" id="EMD-11299"/>
<dbReference type="EMDB" id="EMD-11301"/>
<dbReference type="EMDB" id="EMD-11302"/>
<dbReference type="EMDB" id="EMD-11310"/>
<dbReference type="EMDB" id="EMD-11320"/>
<dbReference type="EMDB" id="EMD-11321"/>
<dbReference type="EMDB" id="EMD-11325"/>
<dbReference type="EMDB" id="EMD-11335"/>
<dbReference type="EMDB" id="EMD-11440"/>
<dbReference type="EMDB" id="EMD-11441"/>
<dbReference type="EMDB" id="EMD-11456"/>
<dbReference type="EMDB" id="EMD-11517"/>
<dbReference type="EMDB" id="EMD-11518"/>
<dbReference type="EMDB" id="EMD-11519"/>
<dbReference type="EMDB" id="EMD-11520"/>
<dbReference type="EMDB" id="EMD-11521"/>
<dbReference type="EMDB" id="EMD-14113"/>
<dbReference type="EMDB" id="EMD-14114"/>
<dbReference type="EMDB" id="EMD-14181"/>
<dbReference type="EMDB" id="EMD-14317"/>
<dbReference type="EMDB" id="EMD-17297"/>
<dbReference type="EMDB" id="EMD-17696"/>
<dbReference type="EMDB" id="EMD-17697"/>
<dbReference type="EMDB" id="EMD-17698"/>
<dbReference type="EMDB" id="EMD-17699"/>
<dbReference type="EMDB" id="EMD-17700"/>
<dbReference type="EMDB" id="EMD-17701"/>
<dbReference type="EMDB" id="EMD-17804"/>
<dbReference type="EMDB" id="EMD-17805"/>
<dbReference type="EMDB" id="EMD-18539"/>
<dbReference type="EMDB" id="EMD-22681"/>
<dbReference type="EMDB" id="EMD-23936"/>
<dbReference type="EMDB" id="EMD-23937"/>
<dbReference type="EMDB" id="EMD-23938"/>
<dbReference type="EMDB" id="EMD-26067"/>
<dbReference type="EMDB" id="EMD-29757"/>
<dbReference type="EMDB" id="EMD-29758"/>
<dbReference type="EMDB" id="EMD-29759"/>
<dbReference type="EMDB" id="EMD-29760"/>
<dbReference type="EMDB" id="EMD-29771"/>
<dbReference type="EMDB" id="EMD-32799"/>
<dbReference type="EMDB" id="EMD-32800"/>
<dbReference type="EMDB" id="EMD-32801"/>
<dbReference type="EMDB" id="EMD-32802"/>
<dbReference type="EMDB" id="EMD-32803"/>
<dbReference type="EMDB" id="EMD-32804"/>
<dbReference type="EMDB" id="EMD-32806"/>
<dbReference type="EMDB" id="EMD-32807"/>
<dbReference type="EMDB" id="EMD-33329"/>
<dbReference type="EMDB" id="EMD-33330"/>
<dbReference type="EMDB" id="EMD-35413"/>
<dbReference type="EMDB" id="EMD-35414"/>
<dbReference type="EMDB" id="EMD-36178"/>
<dbReference type="EMDB" id="EMD-36179"/>
<dbReference type="EMDB" id="EMD-36180"/>
<dbReference type="EMDB" id="EMD-36181"/>
<dbReference type="EMDB" id="EMD-36838"/>
<dbReference type="EMDB" id="EMD-3770"/>
<dbReference type="EMDB" id="EMD-38548"/>
<dbReference type="EMDB" id="EMD-38549"/>
<dbReference type="EMDB" id="EMD-38629"/>
<dbReference type="EMDB" id="EMD-38630"/>
<dbReference type="EMDB" id="EMD-38631"/>
<dbReference type="EMDB" id="EMD-38752"/>
<dbReference type="EMDB" id="EMD-38753"/>
<dbReference type="EMDB" id="EMD-38754"/>
<dbReference type="EMDB" id="EMD-3883"/>
<dbReference type="EMDB" id="EMD-39455"/>
<dbReference type="EMDB" id="EMD-39456"/>
<dbReference type="EMDB" id="EMD-39956"/>
<dbReference type="EMDB" id="EMD-39957"/>
<dbReference type="EMDB" id="EMD-39958"/>
<dbReference type="EMDB" id="EMD-40205"/>
<dbReference type="EMDB" id="EMD-4070"/>
<dbReference type="EMDB" id="EMD-41039"/>
<dbReference type="EMDB" id="EMD-42351"/>
<dbReference type="EMDB" id="EMD-4242"/>
<dbReference type="EMDB" id="EMD-4337"/>
<dbReference type="EMDB" id="EMD-4348"/>
<dbReference type="EMDB" id="EMD-4349"/>
<dbReference type="EMDB" id="EMD-4350"/>
<dbReference type="EMDB" id="EMD-4351"/>
<dbReference type="EMDB" id="EMD-4352"/>
<dbReference type="EMDB" id="EMD-4353"/>
<dbReference type="EMDB" id="EMD-44641"/>
<dbReference type="EMDB" id="EMD-44671"/>
<dbReference type="EMDB" id="EMD-45170"/>
<dbReference type="EMDB" id="EMD-51132"/>
<dbReference type="EMDB" id="EMD-51134"/>
<dbReference type="EMDB" id="EMD-9240"/>
<dbReference type="EMDB" id="EMD-9242"/>
<dbReference type="EMDB" id="EMD-9701"/>
<dbReference type="EMDB" id="EMD-9702"/>
<dbReference type="EMDB" id="EMD-9703"/>
<dbReference type="SMR" id="P62847"/>
<dbReference type="BioGRID" id="112143">
    <property type="interactions" value="554"/>
</dbReference>
<dbReference type="ComplexPortal" id="CPX-5223">
    <property type="entry name" value="40S cytosolic small ribosomal subunit"/>
</dbReference>
<dbReference type="CORUM" id="P62847"/>
<dbReference type="FunCoup" id="P62847">
    <property type="interactions" value="2851"/>
</dbReference>
<dbReference type="IntAct" id="P62847">
    <property type="interactions" value="186"/>
</dbReference>
<dbReference type="MINT" id="P62847"/>
<dbReference type="STRING" id="9606.ENSP00000414321"/>
<dbReference type="GlyGen" id="P62847">
    <property type="glycosylation" value="2 sites, 5 N-linked glycans (1 site), 1 O-linked glycan (1 site)"/>
</dbReference>
<dbReference type="iPTMnet" id="P62847"/>
<dbReference type="MetOSite" id="P62847"/>
<dbReference type="PhosphoSitePlus" id="P62847"/>
<dbReference type="SwissPalm" id="P62847"/>
<dbReference type="BioMuta" id="RPS24"/>
<dbReference type="DMDM" id="51338645"/>
<dbReference type="jPOST" id="P62847"/>
<dbReference type="MassIVE" id="P62847"/>
<dbReference type="PaxDb" id="9606-ENSP00000414321"/>
<dbReference type="PeptideAtlas" id="P62847"/>
<dbReference type="PRIDE" id="P62847"/>
<dbReference type="ProteomicsDB" id="17381"/>
<dbReference type="ProteomicsDB" id="57434"/>
<dbReference type="ProteomicsDB" id="57435">
    <molecule id="P62847-2"/>
</dbReference>
<dbReference type="ProteomicsDB" id="57436">
    <molecule id="P62847-3"/>
</dbReference>
<dbReference type="Pumba" id="P62847"/>
<dbReference type="TopDownProteomics" id="P62847-1">
    <molecule id="P62847-1"/>
</dbReference>
<dbReference type="TopDownProteomics" id="P62847-2">
    <molecule id="P62847-2"/>
</dbReference>
<dbReference type="TopDownProteomics" id="P62847-4">
    <molecule id="P62847-4"/>
</dbReference>
<dbReference type="Antibodypedia" id="1244">
    <property type="antibodies" value="153 antibodies from 26 providers"/>
</dbReference>
<dbReference type="DNASU" id="6229"/>
<dbReference type="Ensembl" id="ENST00000372360.9">
    <molecule id="P62847-2"/>
    <property type="protein sequence ID" value="ENSP00000361435.4"/>
    <property type="gene ID" value="ENSG00000138326.21"/>
</dbReference>
<dbReference type="Ensembl" id="ENST00000440692.6">
    <molecule id="P62847-4"/>
    <property type="protein sequence ID" value="ENSP00000414321.1"/>
    <property type="gene ID" value="ENSG00000138326.21"/>
</dbReference>
<dbReference type="Ensembl" id="ENST00000464716.6">
    <molecule id="P62847-3"/>
    <property type="protein sequence ID" value="ENSP00000494231.1"/>
    <property type="gene ID" value="ENSG00000138326.21"/>
</dbReference>
<dbReference type="Ensembl" id="ENST00000613865.5">
    <molecule id="P62847-1"/>
    <property type="protein sequence ID" value="ENSP00000478869.2"/>
    <property type="gene ID" value="ENSG00000138326.21"/>
</dbReference>
<dbReference type="GeneID" id="6229"/>
<dbReference type="KEGG" id="hsa:6229"/>
<dbReference type="MANE-Select" id="ENST00000372360.9">
    <molecule id="P62847-2"/>
    <property type="protein sequence ID" value="ENSP00000361435.4"/>
    <property type="RefSeq nucleotide sequence ID" value="NM_033022.4"/>
    <property type="RefSeq protein sequence ID" value="NP_148982.1"/>
</dbReference>
<dbReference type="UCSC" id="uc001jzp.4">
    <property type="organism name" value="human"/>
</dbReference>
<dbReference type="AGR" id="HGNC:10411"/>
<dbReference type="CTD" id="6229"/>
<dbReference type="DisGeNET" id="6229"/>
<dbReference type="GeneCards" id="RPS24"/>
<dbReference type="GeneReviews" id="RPS24"/>
<dbReference type="HGNC" id="HGNC:10411">
    <property type="gene designation" value="RPS24"/>
</dbReference>
<dbReference type="HPA" id="ENSG00000138326">
    <property type="expression patterns" value="Low tissue specificity"/>
</dbReference>
<dbReference type="MalaCards" id="RPS24"/>
<dbReference type="MIM" id="602412">
    <property type="type" value="gene"/>
</dbReference>
<dbReference type="MIM" id="610629">
    <property type="type" value="phenotype"/>
</dbReference>
<dbReference type="neXtProt" id="NX_P62847"/>
<dbReference type="OpenTargets" id="ENSG00000138326"/>
<dbReference type="Orphanet" id="124">
    <property type="disease" value="Diamond-Blackfan anemia"/>
</dbReference>
<dbReference type="PharmGKB" id="PA34815"/>
<dbReference type="VEuPathDB" id="HostDB:ENSG00000138326"/>
<dbReference type="eggNOG" id="KOG3424">
    <property type="taxonomic scope" value="Eukaryota"/>
</dbReference>
<dbReference type="GeneTree" id="ENSGT00390000000153"/>
<dbReference type="HOGENOM" id="CLU_086546_0_0_1"/>
<dbReference type="InParanoid" id="P62847"/>
<dbReference type="OMA" id="IRVKKYM"/>
<dbReference type="OrthoDB" id="9532209at2759"/>
<dbReference type="PAN-GO" id="P62847">
    <property type="GO annotations" value="0 GO annotations based on evolutionary models"/>
</dbReference>
<dbReference type="PhylomeDB" id="P62847"/>
<dbReference type="TreeFam" id="TF314134"/>
<dbReference type="PathwayCommons" id="P62847"/>
<dbReference type="Reactome" id="R-HSA-156827">
    <property type="pathway name" value="L13a-mediated translational silencing of Ceruloplasmin expression"/>
</dbReference>
<dbReference type="Reactome" id="R-HSA-156902">
    <property type="pathway name" value="Peptide chain elongation"/>
</dbReference>
<dbReference type="Reactome" id="R-HSA-1799339">
    <property type="pathway name" value="SRP-dependent cotranslational protein targeting to membrane"/>
</dbReference>
<dbReference type="Reactome" id="R-HSA-192823">
    <property type="pathway name" value="Viral mRNA Translation"/>
</dbReference>
<dbReference type="Reactome" id="R-HSA-2408557">
    <property type="pathway name" value="Selenocysteine synthesis"/>
</dbReference>
<dbReference type="Reactome" id="R-HSA-6791226">
    <property type="pathway name" value="Major pathway of rRNA processing in the nucleolus and cytosol"/>
</dbReference>
<dbReference type="Reactome" id="R-HSA-72649">
    <property type="pathway name" value="Translation initiation complex formation"/>
</dbReference>
<dbReference type="Reactome" id="R-HSA-72689">
    <property type="pathway name" value="Formation of a pool of free 40S subunits"/>
</dbReference>
<dbReference type="Reactome" id="R-HSA-72695">
    <property type="pathway name" value="Formation of the ternary complex, and subsequently, the 43S complex"/>
</dbReference>
<dbReference type="Reactome" id="R-HSA-72702">
    <property type="pathway name" value="Ribosomal scanning and start codon recognition"/>
</dbReference>
<dbReference type="Reactome" id="R-HSA-72706">
    <property type="pathway name" value="GTP hydrolysis and joining of the 60S ribosomal subunit"/>
</dbReference>
<dbReference type="Reactome" id="R-HSA-72764">
    <property type="pathway name" value="Eukaryotic Translation Termination"/>
</dbReference>
<dbReference type="Reactome" id="R-HSA-9010553">
    <property type="pathway name" value="Regulation of expression of SLITs and ROBOs"/>
</dbReference>
<dbReference type="Reactome" id="R-HSA-9633012">
    <property type="pathway name" value="Response of EIF2AK4 (GCN2) to amino acid deficiency"/>
</dbReference>
<dbReference type="Reactome" id="R-HSA-9735869">
    <property type="pathway name" value="SARS-CoV-1 modulates host translation machinery"/>
</dbReference>
<dbReference type="Reactome" id="R-HSA-9754678">
    <property type="pathway name" value="SARS-CoV-2 modulates host translation machinery"/>
</dbReference>
<dbReference type="Reactome" id="R-HSA-975956">
    <property type="pathway name" value="Nonsense Mediated Decay (NMD) independent of the Exon Junction Complex (EJC)"/>
</dbReference>
<dbReference type="Reactome" id="R-HSA-975957">
    <property type="pathway name" value="Nonsense Mediated Decay (NMD) enhanced by the Exon Junction Complex (EJC)"/>
</dbReference>
<dbReference type="SignaLink" id="P62847"/>
<dbReference type="SIGNOR" id="P62847"/>
<dbReference type="BioGRID-ORCS" id="6229">
    <property type="hits" value="764 hits in 1101 CRISPR screens"/>
</dbReference>
<dbReference type="CD-CODE" id="232F8A39">
    <property type="entry name" value="P-body"/>
</dbReference>
<dbReference type="CD-CODE" id="91857CE7">
    <property type="entry name" value="Nucleolus"/>
</dbReference>
<dbReference type="CD-CODE" id="DEE660B4">
    <property type="entry name" value="Stress granule"/>
</dbReference>
<dbReference type="ChiTaRS" id="RPS24">
    <property type="organism name" value="human"/>
</dbReference>
<dbReference type="EvolutionaryTrace" id="P62847"/>
<dbReference type="GeneWiki" id="RPS24"/>
<dbReference type="GenomeRNAi" id="6229"/>
<dbReference type="Pharos" id="P62847">
    <property type="development level" value="Tbio"/>
</dbReference>
<dbReference type="PRO" id="PR:P62847"/>
<dbReference type="Proteomes" id="UP000005640">
    <property type="component" value="Chromosome 10"/>
</dbReference>
<dbReference type="RNAct" id="P62847">
    <property type="molecule type" value="protein"/>
</dbReference>
<dbReference type="Bgee" id="ENSG00000138326">
    <property type="expression patterns" value="Expressed in mucosa of sigmoid colon and 206 other cell types or tissues"/>
</dbReference>
<dbReference type="ExpressionAtlas" id="P62847">
    <property type="expression patterns" value="baseline and differential"/>
</dbReference>
<dbReference type="GO" id="GO:0005737">
    <property type="term" value="C:cytoplasm"/>
    <property type="evidence" value="ECO:0000303"/>
    <property type="project" value="ComplexPortal"/>
</dbReference>
<dbReference type="GO" id="GO:0005829">
    <property type="term" value="C:cytosol"/>
    <property type="evidence" value="ECO:0000314"/>
    <property type="project" value="HPA"/>
</dbReference>
<dbReference type="GO" id="GO:0022626">
    <property type="term" value="C:cytosolic ribosome"/>
    <property type="evidence" value="ECO:0000314"/>
    <property type="project" value="FlyBase"/>
</dbReference>
<dbReference type="GO" id="GO:0022627">
    <property type="term" value="C:cytosolic small ribosomal subunit"/>
    <property type="evidence" value="ECO:0000314"/>
    <property type="project" value="UniProtKB"/>
</dbReference>
<dbReference type="GO" id="GO:0005783">
    <property type="term" value="C:endoplasmic reticulum"/>
    <property type="evidence" value="ECO:0000314"/>
    <property type="project" value="HPA"/>
</dbReference>
<dbReference type="GO" id="GO:0016020">
    <property type="term" value="C:membrane"/>
    <property type="evidence" value="ECO:0007005"/>
    <property type="project" value="UniProtKB"/>
</dbReference>
<dbReference type="GO" id="GO:0005730">
    <property type="term" value="C:nucleolus"/>
    <property type="evidence" value="ECO:0007669"/>
    <property type="project" value="UniProtKB-SubCell"/>
</dbReference>
<dbReference type="GO" id="GO:0005654">
    <property type="term" value="C:nucleoplasm"/>
    <property type="evidence" value="ECO:0000304"/>
    <property type="project" value="Reactome"/>
</dbReference>
<dbReference type="GO" id="GO:0005634">
    <property type="term" value="C:nucleus"/>
    <property type="evidence" value="ECO:0007005"/>
    <property type="project" value="UniProtKB"/>
</dbReference>
<dbReference type="GO" id="GO:0015935">
    <property type="term" value="C:small ribosomal subunit"/>
    <property type="evidence" value="ECO:0007005"/>
    <property type="project" value="UniProtKB"/>
</dbReference>
<dbReference type="GO" id="GO:0032040">
    <property type="term" value="C:small-subunit processome"/>
    <property type="evidence" value="ECO:0000314"/>
    <property type="project" value="UniProtKB"/>
</dbReference>
<dbReference type="GO" id="GO:0003723">
    <property type="term" value="F:RNA binding"/>
    <property type="evidence" value="ECO:0007005"/>
    <property type="project" value="UniProtKB"/>
</dbReference>
<dbReference type="GO" id="GO:0003735">
    <property type="term" value="F:structural constituent of ribosome"/>
    <property type="evidence" value="ECO:0000314"/>
    <property type="project" value="FlyBase"/>
</dbReference>
<dbReference type="GO" id="GO:0031369">
    <property type="term" value="F:translation initiation factor binding"/>
    <property type="evidence" value="ECO:0000250"/>
    <property type="project" value="UniProtKB"/>
</dbReference>
<dbReference type="GO" id="GO:0002181">
    <property type="term" value="P:cytoplasmic translation"/>
    <property type="evidence" value="ECO:0000303"/>
    <property type="project" value="ComplexPortal"/>
</dbReference>
<dbReference type="GO" id="GO:0034101">
    <property type="term" value="P:erythrocyte homeostasis"/>
    <property type="evidence" value="ECO:0000315"/>
    <property type="project" value="UniProtKB"/>
</dbReference>
<dbReference type="GO" id="GO:0042274">
    <property type="term" value="P:ribosomal small subunit biogenesis"/>
    <property type="evidence" value="ECO:0000314"/>
    <property type="project" value="UniProtKB"/>
</dbReference>
<dbReference type="GO" id="GO:0006364">
    <property type="term" value="P:rRNA processing"/>
    <property type="evidence" value="ECO:0000315"/>
    <property type="project" value="UniProtKB"/>
</dbReference>
<dbReference type="GO" id="GO:0006412">
    <property type="term" value="P:translation"/>
    <property type="evidence" value="ECO:0000305"/>
    <property type="project" value="UniProtKB"/>
</dbReference>
<dbReference type="FunFam" id="3.30.70.3370:FF:000001">
    <property type="entry name" value="40S ribosomal protein S24"/>
    <property type="match status" value="1"/>
</dbReference>
<dbReference type="Gene3D" id="3.30.70.3370">
    <property type="match status" value="1"/>
</dbReference>
<dbReference type="HAMAP" id="MF_00545">
    <property type="entry name" value="Ribosomal_eS24"/>
    <property type="match status" value="1"/>
</dbReference>
<dbReference type="InterPro" id="IPR053709">
    <property type="entry name" value="eRP_eS24_sf"/>
</dbReference>
<dbReference type="InterPro" id="IPR001976">
    <property type="entry name" value="Ribosomal_eS24"/>
</dbReference>
<dbReference type="InterPro" id="IPR018098">
    <property type="entry name" value="Ribosomal_eS24_CS"/>
</dbReference>
<dbReference type="InterPro" id="IPR012678">
    <property type="entry name" value="Ribosomal_uL23/eL15/eS24_sf"/>
</dbReference>
<dbReference type="PANTHER" id="PTHR10496">
    <property type="entry name" value="40S RIBOSOMAL PROTEIN S24"/>
    <property type="match status" value="1"/>
</dbReference>
<dbReference type="Pfam" id="PF01282">
    <property type="entry name" value="Ribosomal_S24e"/>
    <property type="match status" value="1"/>
</dbReference>
<dbReference type="SUPFAM" id="SSF54189">
    <property type="entry name" value="Ribosomal proteins S24e, L23 and L15e"/>
    <property type="match status" value="1"/>
</dbReference>
<dbReference type="PROSITE" id="PS00529">
    <property type="entry name" value="RIBOSOMAL_S24E"/>
    <property type="match status" value="1"/>
</dbReference>
<comment type="function">
    <text evidence="3 4 5">Component of the small ribosomal subunit (PubMed:23636399). The ribosome is a large ribonucleoprotein complex responsible for the synthesis of proteins in the cell (PubMed:23636399). Required for processing of pre-rRNA and maturation of 40S ribosomal subunits (PubMed:18230666). Part of the small subunit (SSU) processome, first precursor of the small eukaryotic ribosomal subunit. During the assembly of the SSU processome in the nucleolus, many ribosome biogenesis factors, an RNA chaperone and ribosomal proteins associate with the nascent pre-rRNA and work in concert to generate RNA folding, modifications, rearrangements and cleavage as well as targeted degradation of pre-ribosomal RNA by the RNA exosome (PubMed:34516797).</text>
</comment>
<comment type="subunit">
    <text evidence="4 5">Component of the small ribosomal subunit (PubMed:23636399). Part of the small subunit (SSU) processome, composed of more than 70 proteins and the RNA chaperone small nucleolar RNA (snoRNA) U3 (PubMed:34516797).</text>
</comment>
<comment type="subcellular location">
    <subcellularLocation>
        <location evidence="4">Cytoplasm</location>
    </subcellularLocation>
    <subcellularLocation>
        <location evidence="5">Nucleus</location>
        <location evidence="5">Nucleolus</location>
    </subcellularLocation>
</comment>
<comment type="alternative products">
    <event type="alternative splicing"/>
    <isoform>
        <id>P62847-1</id>
        <id>P16632-1</id>
        <name>1</name>
        <sequence type="displayed"/>
    </isoform>
    <isoform>
        <id>P62847-2</id>
        <id>P16632-2</id>
        <name>2</name>
        <sequence type="described" ref="VSP_005724"/>
    </isoform>
    <isoform>
        <id>P62847-3</id>
        <name>3</name>
        <sequence type="described" ref="VSP_039113"/>
    </isoform>
    <isoform>
        <id>P62847-4</id>
        <name>4</name>
        <sequence type="described" ref="VSP_045672"/>
    </isoform>
</comment>
<comment type="tissue specificity">
    <text evidence="2">Mature tissues, such as adult brain, skeletal muscle, heart, and kidney, express low levels, whereas tissues and organs with significant populations of proliferating cells, such as fetal brain, placenta, bone marrow, and various glandular organs, contain significantly higher levels.</text>
</comment>
<comment type="disease" evidence="2">
    <disease id="DI-00393">
        <name>Diamond-Blackfan anemia 3</name>
        <acronym>DBA3</acronym>
        <description>A form of Diamond-Blackfan anemia, a congenital non-regenerative hypoplastic anemia that usually presents early in infancy. Diamond-Blackfan anemia is characterized by a moderate to severe macrocytic anemia, erythroblastopenia, and an increased risk of developing leukemia. 30 to 40% of Diamond-Blackfan anemia patients present with short stature and congenital anomalies, the most frequent being craniofacial (Pierre-Robin syndrome and cleft palate), thumb and urogenital anomalies.</description>
        <dbReference type="MIM" id="610629"/>
    </disease>
    <text>The disease is caused by variants affecting the gene represented in this entry.</text>
</comment>
<comment type="similarity">
    <text evidence="12">Belongs to the eukaryotic ribosomal protein eS24 family.</text>
</comment>
<keyword id="KW-0002">3D-structure</keyword>
<keyword id="KW-0007">Acetylation</keyword>
<keyword id="KW-0025">Alternative splicing</keyword>
<keyword id="KW-0963">Cytoplasm</keyword>
<keyword id="KW-1024">Diamond-Blackfan anemia</keyword>
<keyword id="KW-0903">Direct protein sequencing</keyword>
<keyword id="KW-1017">Isopeptide bond</keyword>
<keyword id="KW-0539">Nucleus</keyword>
<keyword id="KW-0597">Phosphoprotein</keyword>
<keyword id="KW-1267">Proteomics identification</keyword>
<keyword id="KW-1185">Reference proteome</keyword>
<keyword id="KW-0687">Ribonucleoprotein</keyword>
<keyword id="KW-0689">Ribosomal protein</keyword>
<keyword id="KW-0832">Ubl conjugation</keyword>
<proteinExistence type="evidence at protein level"/>
<accession>P62847</accession>
<accession>E7EPK6</accession>
<accession>P16632</accession>
<accession>Q5T0P7</accession>
<accession>Q5T0P8</accession>
<accession>Q7Z3D1</accession>
<organism>
    <name type="scientific">Homo sapiens</name>
    <name type="common">Human</name>
    <dbReference type="NCBI Taxonomy" id="9606"/>
    <lineage>
        <taxon>Eukaryota</taxon>
        <taxon>Metazoa</taxon>
        <taxon>Chordata</taxon>
        <taxon>Craniata</taxon>
        <taxon>Vertebrata</taxon>
        <taxon>Euteleostomi</taxon>
        <taxon>Mammalia</taxon>
        <taxon>Eutheria</taxon>
        <taxon>Euarchontoglires</taxon>
        <taxon>Primates</taxon>
        <taxon>Haplorrhini</taxon>
        <taxon>Catarrhini</taxon>
        <taxon>Hominidae</taxon>
        <taxon>Homo</taxon>
    </lineage>
</organism>
<name>RS24_HUMAN</name>
<evidence type="ECO:0000256" key="1">
    <source>
        <dbReference type="SAM" id="MobiDB-lite"/>
    </source>
</evidence>
<evidence type="ECO:0000269" key="2">
    <source>
    </source>
</evidence>
<evidence type="ECO:0000269" key="3">
    <source>
    </source>
</evidence>
<evidence type="ECO:0000269" key="4">
    <source>
    </source>
</evidence>
<evidence type="ECO:0000269" key="5">
    <source>
    </source>
</evidence>
<evidence type="ECO:0000269" key="6">
    <source ref="9"/>
</evidence>
<evidence type="ECO:0000303" key="7">
    <source>
    </source>
</evidence>
<evidence type="ECO:0000303" key="8">
    <source>
    </source>
</evidence>
<evidence type="ECO:0000303" key="9">
    <source>
    </source>
</evidence>
<evidence type="ECO:0000303" key="10">
    <source>
    </source>
</evidence>
<evidence type="ECO:0000303" key="11">
    <source ref="3"/>
</evidence>
<evidence type="ECO:0000305" key="12"/>
<evidence type="ECO:0000312" key="13">
    <source>
        <dbReference type="HGNC" id="HGNC:10411"/>
    </source>
</evidence>
<evidence type="ECO:0007744" key="14">
    <source>
        <dbReference type="PDB" id="7MQ8"/>
    </source>
</evidence>
<evidence type="ECO:0007744" key="15">
    <source>
        <dbReference type="PDB" id="7MQ9"/>
    </source>
</evidence>
<evidence type="ECO:0007744" key="16">
    <source>
        <dbReference type="PDB" id="7MQA"/>
    </source>
</evidence>
<evidence type="ECO:0007744" key="17">
    <source>
    </source>
</evidence>
<evidence type="ECO:0007744" key="18">
    <source>
    </source>
</evidence>
<evidence type="ECO:0007744" key="19">
    <source>
    </source>
</evidence>
<evidence type="ECO:0007744" key="20">
    <source>
    </source>
</evidence>
<evidence type="ECO:0007744" key="21">
    <source>
    </source>
</evidence>
<evidence type="ECO:0007829" key="22">
    <source>
        <dbReference type="PDB" id="6ZLW"/>
    </source>
</evidence>
<evidence type="ECO:0007829" key="23">
    <source>
        <dbReference type="PDB" id="6ZUO"/>
    </source>
</evidence>
<evidence type="ECO:0007829" key="24">
    <source>
        <dbReference type="PDB" id="6ZVH"/>
    </source>
</evidence>
<evidence type="ECO:0007829" key="25">
    <source>
        <dbReference type="PDB" id="7R4X"/>
    </source>
</evidence>
<feature type="chain" id="PRO_0000137623" description="Small ribosomal subunit protein eS24">
    <location>
        <begin position="1"/>
        <end position="133"/>
    </location>
</feature>
<feature type="region of interest" description="Disordered" evidence="1">
    <location>
        <begin position="92"/>
        <end position="133"/>
    </location>
</feature>
<feature type="compositionally biased region" description="Basic residues" evidence="1">
    <location>
        <begin position="101"/>
        <end position="119"/>
    </location>
</feature>
<feature type="modified residue" description="N-acetylmethionine" evidence="6 17 19 20">
    <location>
        <position position="1"/>
    </location>
</feature>
<feature type="modified residue" description="Phosphothreonine" evidence="18">
    <location>
        <position position="9"/>
    </location>
</feature>
<feature type="cross-link" description="Glycyl lysine isopeptide (Lys-Gly) (interchain with G-Cter in SUMO2)" evidence="21">
    <location>
        <position position="37"/>
    </location>
</feature>
<feature type="splice variant" id="VSP_005724" description="In isoform 2." evidence="7 8">
    <location>
        <begin position="131"/>
        <end position="133"/>
    </location>
</feature>
<feature type="splice variant" id="VSP_039113" description="In isoform 3." evidence="9">
    <original>PKE</original>
    <variation>KK</variation>
    <location>
        <begin position="131"/>
        <end position="133"/>
    </location>
</feature>
<feature type="splice variant" id="VSP_045672" description="In isoform 4." evidence="11">
    <original>PKE</original>
    <variation>MRELGLGVQALGRISQEERCTDVKNSKARESRGVVWQVEVPGPWSVWTCGRLRRGCGKYLQVAVTWRKTENREQCCQACLLERALVRNGAFMSPASPAPAGSPHPVDGDLVLHLPEALSATLTLSPHIQAINKSFGPFFEIHQESSCFSPPSCLSGLGH</variation>
    <location>
        <begin position="131"/>
        <end position="133"/>
    </location>
</feature>
<feature type="strand" evidence="25">
    <location>
        <begin position="6"/>
        <end position="15"/>
    </location>
</feature>
<feature type="turn" evidence="25">
    <location>
        <begin position="16"/>
        <end position="19"/>
    </location>
</feature>
<feature type="strand" evidence="25">
    <location>
        <begin position="20"/>
        <end position="29"/>
    </location>
</feature>
<feature type="strand" evidence="22">
    <location>
        <begin position="30"/>
        <end position="32"/>
    </location>
</feature>
<feature type="helix" evidence="25">
    <location>
        <begin position="37"/>
        <end position="47"/>
    </location>
</feature>
<feature type="strand" evidence="23">
    <location>
        <begin position="48"/>
        <end position="50"/>
    </location>
</feature>
<feature type="helix" evidence="25">
    <location>
        <begin position="52"/>
        <end position="54"/>
    </location>
</feature>
<feature type="strand" evidence="25">
    <location>
        <begin position="55"/>
        <end position="62"/>
    </location>
</feature>
<feature type="strand" evidence="25">
    <location>
        <begin position="66"/>
        <end position="77"/>
    </location>
</feature>
<feature type="helix" evidence="25">
    <location>
        <begin position="79"/>
        <end position="85"/>
    </location>
</feature>
<feature type="helix" evidence="25">
    <location>
        <begin position="88"/>
        <end position="93"/>
    </location>
</feature>
<feature type="helix" evidence="25">
    <location>
        <begin position="104"/>
        <end position="115"/>
    </location>
</feature>
<feature type="helix" evidence="25">
    <location>
        <begin position="119"/>
        <end position="124"/>
    </location>
</feature>
<feature type="turn" evidence="24">
    <location>
        <begin position="127"/>
        <end position="129"/>
    </location>
</feature>
<sequence>MNDTVTIRTRKFMTNRLLQRKQMVIDVLHPGKATVPKTEIREKLAKMYKTTPDVIFVFGFRTHFGGGKTTGFGMIYDSLDYAKKNEPKHRLARHGLYEKKKTSRKQRKERKNRMKKVRGTAKANVGAGKKPKE</sequence>